<dbReference type="EC" id="3.6.5.2" evidence="3"/>
<dbReference type="EMBL" id="BC071176">
    <property type="protein sequence ID" value="AAH71176.1"/>
    <property type="molecule type" value="mRNA"/>
</dbReference>
<dbReference type="EMBL" id="BC105863">
    <property type="protein sequence ID" value="AAI05864.1"/>
    <property type="molecule type" value="mRNA"/>
</dbReference>
<dbReference type="EMBL" id="M83675">
    <property type="protein sequence ID" value="AAA41997.1"/>
    <property type="status" value="ALT_INIT"/>
    <property type="molecule type" value="mRNA"/>
</dbReference>
<dbReference type="PIR" id="A42148">
    <property type="entry name" value="A42148"/>
</dbReference>
<dbReference type="RefSeq" id="NP_446450.2">
    <property type="nucleotide sequence ID" value="NM_053998.2"/>
</dbReference>
<dbReference type="SMR" id="P35280"/>
<dbReference type="BioGRID" id="250675">
    <property type="interactions" value="4"/>
</dbReference>
<dbReference type="FunCoup" id="P35280">
    <property type="interactions" value="3939"/>
</dbReference>
<dbReference type="IntAct" id="P35280">
    <property type="interactions" value="3"/>
</dbReference>
<dbReference type="STRING" id="10116.ENSRNOP00000020748"/>
<dbReference type="iPTMnet" id="P35280"/>
<dbReference type="PhosphoSitePlus" id="P35280"/>
<dbReference type="jPOST" id="P35280"/>
<dbReference type="PaxDb" id="10116-ENSRNOP00000020748"/>
<dbReference type="Ensembl" id="ENSRNOT00000077789.2">
    <property type="protein sequence ID" value="ENSRNOP00000073296.2"/>
    <property type="gene ID" value="ENSRNOG00000014621.8"/>
</dbReference>
<dbReference type="GeneID" id="117103"/>
<dbReference type="KEGG" id="rno:117103"/>
<dbReference type="UCSC" id="RGD:621144">
    <property type="organism name" value="rat"/>
</dbReference>
<dbReference type="AGR" id="RGD:621144"/>
<dbReference type="CTD" id="4218"/>
<dbReference type="RGD" id="621144">
    <property type="gene designation" value="Rab8a"/>
</dbReference>
<dbReference type="eggNOG" id="KOG0078">
    <property type="taxonomic scope" value="Eukaryota"/>
</dbReference>
<dbReference type="GeneTree" id="ENSGT00940000157246"/>
<dbReference type="HOGENOM" id="CLU_041217_23_1_1"/>
<dbReference type="InParanoid" id="P35280"/>
<dbReference type="OMA" id="SKMEQNE"/>
<dbReference type="OrthoDB" id="9989112at2759"/>
<dbReference type="PhylomeDB" id="P35280"/>
<dbReference type="Reactome" id="R-RNO-2565942">
    <property type="pathway name" value="Regulation of PLK1 Activity at G2/M Transition"/>
</dbReference>
<dbReference type="Reactome" id="R-RNO-5620912">
    <property type="pathway name" value="Anchoring of the basal body to the plasma membrane"/>
</dbReference>
<dbReference type="Reactome" id="R-RNO-5620916">
    <property type="pathway name" value="VxPx cargo-targeting to cilium"/>
</dbReference>
<dbReference type="Reactome" id="R-RNO-8854214">
    <property type="pathway name" value="TBC/RABGAPs"/>
</dbReference>
<dbReference type="Reactome" id="R-RNO-8873719">
    <property type="pathway name" value="RAB geranylgeranylation"/>
</dbReference>
<dbReference type="Reactome" id="R-RNO-8876198">
    <property type="pathway name" value="RAB GEFs exchange GTP for GDP on RABs"/>
</dbReference>
<dbReference type="PRO" id="PR:P35280"/>
<dbReference type="Proteomes" id="UP000002494">
    <property type="component" value="Chromosome 16"/>
</dbReference>
<dbReference type="Bgee" id="ENSRNOG00000014621">
    <property type="expression patterns" value="Expressed in spleen and 20 other cell types or tissues"/>
</dbReference>
<dbReference type="ExpressionAtlas" id="P35280">
    <property type="expression patterns" value="baseline and differential"/>
</dbReference>
<dbReference type="GO" id="GO:0015629">
    <property type="term" value="C:actin cytoskeleton"/>
    <property type="evidence" value="ECO:0007669"/>
    <property type="project" value="Ensembl"/>
</dbReference>
<dbReference type="GO" id="GO:0034451">
    <property type="term" value="C:centriolar satellite"/>
    <property type="evidence" value="ECO:0007669"/>
    <property type="project" value="Ensembl"/>
</dbReference>
<dbReference type="GO" id="GO:0005814">
    <property type="term" value="C:centriole"/>
    <property type="evidence" value="ECO:0007669"/>
    <property type="project" value="UniProtKB-SubCell"/>
</dbReference>
<dbReference type="GO" id="GO:0005813">
    <property type="term" value="C:centrosome"/>
    <property type="evidence" value="ECO:0000250"/>
    <property type="project" value="UniProtKB"/>
</dbReference>
<dbReference type="GO" id="GO:0036064">
    <property type="term" value="C:ciliary basal body"/>
    <property type="evidence" value="ECO:0000250"/>
    <property type="project" value="UniProtKB"/>
</dbReference>
<dbReference type="GO" id="GO:0097546">
    <property type="term" value="C:ciliary base"/>
    <property type="evidence" value="ECO:0000266"/>
    <property type="project" value="RGD"/>
</dbReference>
<dbReference type="GO" id="GO:0060170">
    <property type="term" value="C:ciliary membrane"/>
    <property type="evidence" value="ECO:0000266"/>
    <property type="project" value="RGD"/>
</dbReference>
<dbReference type="GO" id="GO:0005929">
    <property type="term" value="C:cilium"/>
    <property type="evidence" value="ECO:0000250"/>
    <property type="project" value="UniProtKB"/>
</dbReference>
<dbReference type="GO" id="GO:0031410">
    <property type="term" value="C:cytoplasmic vesicle"/>
    <property type="evidence" value="ECO:0000314"/>
    <property type="project" value="UniProtKB"/>
</dbReference>
<dbReference type="GO" id="GO:0030659">
    <property type="term" value="C:cytoplasmic vesicle membrane"/>
    <property type="evidence" value="ECO:0000304"/>
    <property type="project" value="Reactome"/>
</dbReference>
<dbReference type="GO" id="GO:0005829">
    <property type="term" value="C:cytosol"/>
    <property type="evidence" value="ECO:0007669"/>
    <property type="project" value="Ensembl"/>
</dbReference>
<dbReference type="GO" id="GO:0030425">
    <property type="term" value="C:dendrite"/>
    <property type="evidence" value="ECO:0000314"/>
    <property type="project" value="RGD"/>
</dbReference>
<dbReference type="GO" id="GO:0005768">
    <property type="term" value="C:endosome"/>
    <property type="evidence" value="ECO:0000318"/>
    <property type="project" value="GO_Central"/>
</dbReference>
<dbReference type="GO" id="GO:0010008">
    <property type="term" value="C:endosome membrane"/>
    <property type="evidence" value="ECO:0000250"/>
    <property type="project" value="UniProtKB"/>
</dbReference>
<dbReference type="GO" id="GO:0070382">
    <property type="term" value="C:exocytic vesicle"/>
    <property type="evidence" value="ECO:0000266"/>
    <property type="project" value="RGD"/>
</dbReference>
<dbReference type="GO" id="GO:0098978">
    <property type="term" value="C:glutamatergic synapse"/>
    <property type="evidence" value="ECO:0000314"/>
    <property type="project" value="SynGO"/>
</dbReference>
<dbReference type="GO" id="GO:0005794">
    <property type="term" value="C:Golgi apparatus"/>
    <property type="evidence" value="ECO:0007669"/>
    <property type="project" value="UniProtKB-SubCell"/>
</dbReference>
<dbReference type="GO" id="GO:0005764">
    <property type="term" value="C:lysosome"/>
    <property type="evidence" value="ECO:0007669"/>
    <property type="project" value="UniProtKB-SubCell"/>
</dbReference>
<dbReference type="GO" id="GO:0030496">
    <property type="term" value="C:midbody"/>
    <property type="evidence" value="ECO:0000250"/>
    <property type="project" value="UniProtKB"/>
</dbReference>
<dbReference type="GO" id="GO:0043005">
    <property type="term" value="C:neuron projection"/>
    <property type="evidence" value="ECO:0000266"/>
    <property type="project" value="RGD"/>
</dbReference>
<dbReference type="GO" id="GO:0043025">
    <property type="term" value="C:neuronal cell body"/>
    <property type="evidence" value="ECO:0000314"/>
    <property type="project" value="RGD"/>
</dbReference>
<dbReference type="GO" id="GO:0097730">
    <property type="term" value="C:non-motile cilium"/>
    <property type="evidence" value="ECO:0000266"/>
    <property type="project" value="RGD"/>
</dbReference>
<dbReference type="GO" id="GO:0005730">
    <property type="term" value="C:nucleolus"/>
    <property type="evidence" value="ECO:0007669"/>
    <property type="project" value="Ensembl"/>
</dbReference>
<dbReference type="GO" id="GO:0005654">
    <property type="term" value="C:nucleoplasm"/>
    <property type="evidence" value="ECO:0007669"/>
    <property type="project" value="Ensembl"/>
</dbReference>
<dbReference type="GO" id="GO:0045335">
    <property type="term" value="C:phagocytic vesicle"/>
    <property type="evidence" value="ECO:0000250"/>
    <property type="project" value="UniProtKB"/>
</dbReference>
<dbReference type="GO" id="GO:0030670">
    <property type="term" value="C:phagocytic vesicle membrane"/>
    <property type="evidence" value="ECO:0007669"/>
    <property type="project" value="UniProtKB-SubCell"/>
</dbReference>
<dbReference type="GO" id="GO:0005886">
    <property type="term" value="C:plasma membrane"/>
    <property type="evidence" value="ECO:0000266"/>
    <property type="project" value="RGD"/>
</dbReference>
<dbReference type="GO" id="GO:0055037">
    <property type="term" value="C:recycling endosome"/>
    <property type="evidence" value="ECO:0000266"/>
    <property type="project" value="RGD"/>
</dbReference>
<dbReference type="GO" id="GO:0055038">
    <property type="term" value="C:recycling endosome membrane"/>
    <property type="evidence" value="ECO:0000250"/>
    <property type="project" value="UniProtKB"/>
</dbReference>
<dbReference type="GO" id="GO:0045202">
    <property type="term" value="C:synapse"/>
    <property type="evidence" value="ECO:0000314"/>
    <property type="project" value="SynGO"/>
</dbReference>
<dbReference type="GO" id="GO:0008021">
    <property type="term" value="C:synaptic vesicle"/>
    <property type="evidence" value="ECO:0000318"/>
    <property type="project" value="GO_Central"/>
</dbReference>
<dbReference type="GO" id="GO:0030140">
    <property type="term" value="C:trans-Golgi network transport vesicle"/>
    <property type="evidence" value="ECO:0000266"/>
    <property type="project" value="RGD"/>
</dbReference>
<dbReference type="GO" id="GO:0019003">
    <property type="term" value="F:GDP binding"/>
    <property type="evidence" value="ECO:0000250"/>
    <property type="project" value="UniProtKB"/>
</dbReference>
<dbReference type="GO" id="GO:0005525">
    <property type="term" value="F:GTP binding"/>
    <property type="evidence" value="ECO:0000250"/>
    <property type="project" value="UniProtKB"/>
</dbReference>
<dbReference type="GO" id="GO:0003924">
    <property type="term" value="F:GTPase activity"/>
    <property type="evidence" value="ECO:0000266"/>
    <property type="project" value="RGD"/>
</dbReference>
<dbReference type="GO" id="GO:0031489">
    <property type="term" value="F:myosin V binding"/>
    <property type="evidence" value="ECO:0000266"/>
    <property type="project" value="RGD"/>
</dbReference>
<dbReference type="GO" id="GO:0019901">
    <property type="term" value="F:protein kinase binding"/>
    <property type="evidence" value="ECO:0000353"/>
    <property type="project" value="RGD"/>
</dbReference>
<dbReference type="GO" id="GO:1990782">
    <property type="term" value="F:protein tyrosine kinase binding"/>
    <property type="evidence" value="ECO:0000353"/>
    <property type="project" value="RGD"/>
</dbReference>
<dbReference type="GO" id="GO:0006914">
    <property type="term" value="P:autophagy"/>
    <property type="evidence" value="ECO:0007669"/>
    <property type="project" value="UniProtKB-KW"/>
</dbReference>
<dbReference type="GO" id="GO:0007409">
    <property type="term" value="P:axonogenesis"/>
    <property type="evidence" value="ECO:0000315"/>
    <property type="project" value="UniProtKB"/>
</dbReference>
<dbReference type="GO" id="GO:0032869">
    <property type="term" value="P:cellular response to insulin stimulus"/>
    <property type="evidence" value="ECO:0000315"/>
    <property type="project" value="UniProtKB"/>
</dbReference>
<dbReference type="GO" id="GO:0060271">
    <property type="term" value="P:cilium assembly"/>
    <property type="evidence" value="ECO:0000250"/>
    <property type="project" value="UniProtKB"/>
</dbReference>
<dbReference type="GO" id="GO:0032456">
    <property type="term" value="P:endocytic recycling"/>
    <property type="evidence" value="ECO:0000266"/>
    <property type="project" value="RGD"/>
</dbReference>
<dbReference type="GO" id="GO:0006887">
    <property type="term" value="P:exocytosis"/>
    <property type="evidence" value="ECO:0000318"/>
    <property type="project" value="GO_Central"/>
</dbReference>
<dbReference type="GO" id="GO:0042593">
    <property type="term" value="P:glucose homeostasis"/>
    <property type="evidence" value="ECO:0000305"/>
    <property type="project" value="UniProtKB"/>
</dbReference>
<dbReference type="GO" id="GO:0007030">
    <property type="term" value="P:Golgi organization"/>
    <property type="evidence" value="ECO:0000250"/>
    <property type="project" value="UniProtKB"/>
</dbReference>
<dbReference type="GO" id="GO:0048210">
    <property type="term" value="P:Golgi vesicle fusion to target membrane"/>
    <property type="evidence" value="ECO:0000266"/>
    <property type="project" value="RGD"/>
</dbReference>
<dbReference type="GO" id="GO:0098969">
    <property type="term" value="P:neurotransmitter receptor transport to postsynaptic membrane"/>
    <property type="evidence" value="ECO:0000314"/>
    <property type="project" value="SynGO"/>
</dbReference>
<dbReference type="GO" id="GO:0098887">
    <property type="term" value="P:neurotransmitter receptor transport, endosome to postsynaptic membrane"/>
    <property type="evidence" value="ECO:0000314"/>
    <property type="project" value="SynGO"/>
</dbReference>
<dbReference type="GO" id="GO:0046326">
    <property type="term" value="P:positive regulation of D-glucose import"/>
    <property type="evidence" value="ECO:0000305"/>
    <property type="project" value="UniProtKB"/>
</dbReference>
<dbReference type="GO" id="GO:0061512">
    <property type="term" value="P:protein localization to cilium"/>
    <property type="evidence" value="ECO:0000250"/>
    <property type="project" value="UniProtKB"/>
</dbReference>
<dbReference type="GO" id="GO:0072659">
    <property type="term" value="P:protein localization to plasma membrane"/>
    <property type="evidence" value="ECO:0000314"/>
    <property type="project" value="UniProtKB"/>
</dbReference>
<dbReference type="GO" id="GO:0010506">
    <property type="term" value="P:regulation of autophagy"/>
    <property type="evidence" value="ECO:0000250"/>
    <property type="project" value="UniProtKB"/>
</dbReference>
<dbReference type="GO" id="GO:0048169">
    <property type="term" value="P:regulation of long-term neuronal synaptic plasticity"/>
    <property type="evidence" value="ECO:0000314"/>
    <property type="project" value="RGD"/>
</dbReference>
<dbReference type="GO" id="GO:0032880">
    <property type="term" value="P:regulation of protein localization"/>
    <property type="evidence" value="ECO:0000315"/>
    <property type="project" value="RGD"/>
</dbReference>
<dbReference type="GO" id="GO:0051223">
    <property type="term" value="P:regulation of protein transport"/>
    <property type="evidence" value="ECO:0000314"/>
    <property type="project" value="RGD"/>
</dbReference>
<dbReference type="GO" id="GO:0006904">
    <property type="term" value="P:vesicle docking involved in exocytosis"/>
    <property type="evidence" value="ECO:0000266"/>
    <property type="project" value="RGD"/>
</dbReference>
<dbReference type="GO" id="GO:0099003">
    <property type="term" value="P:vesicle-mediated transport in synapse"/>
    <property type="evidence" value="ECO:0000314"/>
    <property type="project" value="SynGO"/>
</dbReference>
<dbReference type="CDD" id="cd01867">
    <property type="entry name" value="Rab8_Rab10_Rab13_like"/>
    <property type="match status" value="1"/>
</dbReference>
<dbReference type="FunFam" id="3.40.50.300:FF:000202">
    <property type="entry name" value="ras-related protein Rab-8A"/>
    <property type="match status" value="1"/>
</dbReference>
<dbReference type="Gene3D" id="3.40.50.300">
    <property type="entry name" value="P-loop containing nucleotide triphosphate hydrolases"/>
    <property type="match status" value="1"/>
</dbReference>
<dbReference type="InterPro" id="IPR027417">
    <property type="entry name" value="P-loop_NTPase"/>
</dbReference>
<dbReference type="InterPro" id="IPR005225">
    <property type="entry name" value="Small_GTP-bd"/>
</dbReference>
<dbReference type="InterPro" id="IPR001806">
    <property type="entry name" value="Small_GTPase"/>
</dbReference>
<dbReference type="InterPro" id="IPR050305">
    <property type="entry name" value="Small_GTPase_Rab"/>
</dbReference>
<dbReference type="NCBIfam" id="TIGR00231">
    <property type="entry name" value="small_GTP"/>
    <property type="match status" value="1"/>
</dbReference>
<dbReference type="PANTHER" id="PTHR47980">
    <property type="entry name" value="LD44762P"/>
    <property type="match status" value="1"/>
</dbReference>
<dbReference type="Pfam" id="PF00071">
    <property type="entry name" value="Ras"/>
    <property type="match status" value="1"/>
</dbReference>
<dbReference type="PRINTS" id="PR00449">
    <property type="entry name" value="RASTRNSFRMNG"/>
</dbReference>
<dbReference type="SMART" id="SM00177">
    <property type="entry name" value="ARF"/>
    <property type="match status" value="1"/>
</dbReference>
<dbReference type="SMART" id="SM00175">
    <property type="entry name" value="RAB"/>
    <property type="match status" value="1"/>
</dbReference>
<dbReference type="SMART" id="SM00176">
    <property type="entry name" value="RAN"/>
    <property type="match status" value="1"/>
</dbReference>
<dbReference type="SMART" id="SM00173">
    <property type="entry name" value="RAS"/>
    <property type="match status" value="1"/>
</dbReference>
<dbReference type="SMART" id="SM00174">
    <property type="entry name" value="RHO"/>
    <property type="match status" value="1"/>
</dbReference>
<dbReference type="SUPFAM" id="SSF52540">
    <property type="entry name" value="P-loop containing nucleoside triphosphate hydrolases"/>
    <property type="match status" value="1"/>
</dbReference>
<dbReference type="PROSITE" id="PS51419">
    <property type="entry name" value="RAB"/>
    <property type="match status" value="1"/>
</dbReference>
<comment type="function">
    <text evidence="2 3 8">The small GTPases Rab are key regulators of intracellular membrane trafficking, from the formation of transport vesicles to their fusion with membranes. Rabs cycle between an inactive GDP-bound form and an active GTP-bound form that is able to recruit to membranes different sets of downstream effectors directly responsible for vesicle formation, movement, tethering and fusion. RAB8A is involved in polarized vesicular trafficking and neurotransmitter release. Together with RAB11A, RAB3IP, the exocyst complex, PARD3, PRKCI, ANXA2, CDC42 and DNMBP promotes transcytosis of PODXL to the apical membrane initiation sites (AMIS), apical surface formation and lumenogenesis (By similarity). Regulates the compacted morphology of the Golgi (By similarity). Together with MYO5B and RAB11A participates in epithelial cell polarization (By similarity). Also involved in membrane trafficking to the cilium and ciliogenesis (By similarity). Together with MICALL2, may also regulate adherens junction assembly (By similarity). May play a role in insulin-induced transport to the plasma membrane of the glucose transporter GLUT4 and therefore play a role in glucose homeostasis (PubMed:21041651). Involved in autophagy (By similarity). Targeted to and stabilized on stressed lysosomes through LRRK2 phosphorylation (By similarity). Suppresses stress-induced lysosomal enlargement through EHBP1 and EHNP1L1 effector proteins (By similarity).</text>
</comment>
<comment type="catalytic activity">
    <reaction evidence="3">
        <text>GTP + H2O = GDP + phosphate + H(+)</text>
        <dbReference type="Rhea" id="RHEA:19669"/>
        <dbReference type="ChEBI" id="CHEBI:15377"/>
        <dbReference type="ChEBI" id="CHEBI:15378"/>
        <dbReference type="ChEBI" id="CHEBI:37565"/>
        <dbReference type="ChEBI" id="CHEBI:43474"/>
        <dbReference type="ChEBI" id="CHEBI:58189"/>
        <dbReference type="EC" id="3.6.5.2"/>
    </reaction>
    <physiologicalReaction direction="left-to-right" evidence="3">
        <dbReference type="Rhea" id="RHEA:19670"/>
    </physiologicalReaction>
</comment>
<comment type="cofactor">
    <cofactor evidence="3">
        <name>Mg(2+)</name>
        <dbReference type="ChEBI" id="CHEBI:18420"/>
    </cofactor>
</comment>
<comment type="activity regulation">
    <text evidence="3 8">Regulated by guanine nucleotide exchange factors (GEFs) such as RAB3IP/Rabin8 and RPGR which promote the exchange of bound GDP for free GTP, GTPase activating proteins (GAPs) which increase the GTP hydrolysis activity, and GDP dissociation inhibitors (GDIs) which inhibit the dissociation of the nucleotide from the GTPase (By similarity). Activated in response to insulin (PubMed:21041651).</text>
</comment>
<comment type="subunit">
    <text evidence="2 3">Interacts (GTP-bound form) with MICALL1; regulates RAB8A association with recycling endosomes (By similarity). Interacts with MICALL2; competes with RAB13 and is involved in E-cadherin endocytic recycling (By similarity). Interacts (GTP-bound form) with MICAL1, MICALCL, MICAL3, EHBP1 and EHBP1L1; at least in case of MICAL1, MICALCL, MICAL3 and EHBP1L1 two molecules of RAB8A can bind to one molecule of the effector protein; ternary complexes of RAB8A, RAB13 and either MICAL1 or EHBP1L1 are possible. Interacts with EHD1 (By similarity). Interacts with MAP4K2 and SYTL4 (By similarity). Interacts with SGSM1 and SGSM3 (By similarity). Interacts with RABIF, RIMS2, RPH3A and RPH3A (By similarity). Interacts with OPTN. Interacts with RAB3IP, RAB3IP functions as guanine exchange factor (GEF). Interacts with MYO5B. Interacts with CIMAP3. Interacts with BIRC6/bruce. Interacts with OCRL (By similarity). Interacts with AHI1 (By similarity). Interacts with DCDC1. Interacts with LRRK2; interaction facilitates phosphorylation of Thr-72. Interacts with RAB31P, GDI1, GDI2, CHM, CHML, RABGGTA, RABGGTB, TBC1D15 and INPP5B; these interactions are dependent on Thr-72 not being phosphorylated. Interacts with RILPL1 and RILPL2; these interactions are dependent on the phosphorylation of Thr-72 by LRRK2. Interacts with DZIP1; prevents inhibition by the GDP-dissociation inhibitor GDI2. Interacts (in GDP-bound form) with RAB3IP/Rabin8, RAB3IP functions as guanine exchange factor (GEF) towards RAB8A (By similarity). Interacts (in GDP-bound form) with RPGR, RPGR functions as GEF towards RAB8A (By similarity).</text>
</comment>
<comment type="subcellular location">
    <subcellularLocation>
        <location evidence="2">Cell membrane</location>
        <topology evidence="2">Lipid-anchor</topology>
        <orientation evidence="2">Cytoplasmic side</orientation>
    </subcellularLocation>
    <subcellularLocation>
        <location evidence="3">Golgi apparatus</location>
    </subcellularLocation>
    <subcellularLocation>
        <location evidence="3">Endosome membrane</location>
    </subcellularLocation>
    <subcellularLocation>
        <location evidence="3">Recycling endosome membrane</location>
    </subcellularLocation>
    <subcellularLocation>
        <location evidence="3">Cell projection</location>
        <location evidence="3">Cilium</location>
    </subcellularLocation>
    <subcellularLocation>
        <location evidence="3 6">Cytoplasmic vesicle</location>
        <location evidence="3 6">Phagosome membrane</location>
        <topology evidence="6">Lipid-anchor</topology>
        <orientation evidence="6">Cytoplasmic side</orientation>
    </subcellularLocation>
    <subcellularLocation>
        <location evidence="2">Cytoplasm</location>
        <location evidence="2">Cytoskeleton</location>
        <location evidence="2">Microtubule organizing center</location>
        <location evidence="2">Centrosome</location>
        <location evidence="2">Centriole</location>
    </subcellularLocation>
    <subcellularLocation>
        <location evidence="2">Cytoplasm</location>
        <location evidence="2">Cytoskeleton</location>
        <location evidence="2">Cilium basal body</location>
    </subcellularLocation>
    <subcellularLocation>
        <location evidence="3">Midbody</location>
    </subcellularLocation>
    <subcellularLocation>
        <location evidence="3">Cytoplasm</location>
    </subcellularLocation>
    <subcellularLocation>
        <location evidence="3">Lysosome</location>
    </subcellularLocation>
    <text evidence="3 4">Colocalizes with OPTN at the Golgi complex and in vesicular structures close to the plasma membrane. In the GDP-bound form, present in the perinuclear region. Shows a polarized distribution to distal regions of cell protrusions in the GTP-bound form. Colocalizes with PARD3, PRKCI, EXOC5, OCLN, PODXL and RAB11A in apical membrane initiation sites (AMIS) during the generation of apical surface and lumenogenesis. Localizes to tubular recycling endosome. Recruited to phagosomes containing S.aureus or Mycobacterium (By similarity). Non-phosphorylated RAB8A predominantly localizes to the cytoplasm whereas phosphorylated RAB8A localizes to the membrane (By similarity). Localizes to enlarged lysosomes through LRRK2 phosphorylation (By similarity). Colocalizes with RPGR at the primary cilia of epithelial cells (By similarity).</text>
</comment>
<comment type="tissue specificity">
    <text>Highest levels in spinal cord, heart, kidney and lung.</text>
</comment>
<comment type="domain">
    <text evidence="5">Switch 1, switch 2 and the interswitch regions are characteristic of Rab GTPases and mediate the interactions with Rab downstream effectors. The switch regions undergo conformational changes upon nucleotide binding which drives interaction with specific sets of effector proteins, with most effectors only binding to GTP-bound Rab.</text>
</comment>
<comment type="PTM">
    <text evidence="3">Phosphorylation of Thr-72 in the switch II region by LRRK2 prevents the association of RAB regulatory proteins, including CHM and RAB GDP dissociation inhibitors GDI1 and GDI2 (By similarity). Phosphorylation by LRRK2 is required for localization to stressed lysosomes (By similarity).</text>
</comment>
<comment type="similarity">
    <text evidence="9">Belongs to the small GTPase superfamily. Rab family.</text>
</comment>
<comment type="sequence caution" evidence="9">
    <conflict type="erroneous initiation">
        <sequence resource="EMBL-CDS" id="AAA41997"/>
    </conflict>
    <text>Truncated N-terminus.</text>
</comment>
<feature type="chain" id="PRO_0000121133" description="Ras-related protein Rab-8A">
    <location>
        <begin position="1"/>
        <end position="204"/>
    </location>
</feature>
<feature type="propeptide" id="PRO_0000370797" description="Removed in mature form" evidence="7">
    <location>
        <begin position="205"/>
        <end position="207"/>
    </location>
</feature>
<feature type="short sequence motif" description="Switch 1" evidence="5">
    <location>
        <begin position="31"/>
        <end position="45"/>
    </location>
</feature>
<feature type="short sequence motif" description="Switch 2" evidence="5">
    <location>
        <begin position="63"/>
        <end position="80"/>
    </location>
</feature>
<feature type="binding site" evidence="3">
    <location>
        <position position="17"/>
    </location>
    <ligand>
        <name>GTP</name>
        <dbReference type="ChEBI" id="CHEBI:37565"/>
    </ligand>
</feature>
<feature type="binding site" evidence="3">
    <location>
        <position position="18"/>
    </location>
    <ligand>
        <name>GTP</name>
        <dbReference type="ChEBI" id="CHEBI:37565"/>
    </ligand>
</feature>
<feature type="binding site" evidence="3">
    <location>
        <position position="19"/>
    </location>
    <ligand>
        <name>GTP</name>
        <dbReference type="ChEBI" id="CHEBI:37565"/>
    </ligand>
</feature>
<feature type="binding site" evidence="3">
    <location>
        <position position="20"/>
    </location>
    <ligand>
        <name>GTP</name>
        <dbReference type="ChEBI" id="CHEBI:37565"/>
    </ligand>
</feature>
<feature type="binding site" evidence="3">
    <location>
        <position position="21"/>
    </location>
    <ligand>
        <name>GTP</name>
        <dbReference type="ChEBI" id="CHEBI:37565"/>
    </ligand>
</feature>
<feature type="binding site" evidence="3">
    <location>
        <position position="22"/>
    </location>
    <ligand>
        <name>GTP</name>
        <dbReference type="ChEBI" id="CHEBI:37565"/>
    </ligand>
</feature>
<feature type="binding site" evidence="3">
    <location>
        <position position="22"/>
    </location>
    <ligand>
        <name>Mg(2+)</name>
        <dbReference type="ChEBI" id="CHEBI:18420"/>
    </ligand>
</feature>
<feature type="binding site" evidence="3">
    <location>
        <position position="23"/>
    </location>
    <ligand>
        <name>GTP</name>
        <dbReference type="ChEBI" id="CHEBI:37565"/>
    </ligand>
</feature>
<feature type="binding site" evidence="3">
    <location>
        <position position="35"/>
    </location>
    <ligand>
        <name>GTP</name>
        <dbReference type="ChEBI" id="CHEBI:37565"/>
    </ligand>
</feature>
<feature type="binding site" evidence="3">
    <location>
        <position position="39"/>
    </location>
    <ligand>
        <name>GTP</name>
        <dbReference type="ChEBI" id="CHEBI:37565"/>
    </ligand>
</feature>
<feature type="binding site" evidence="3">
    <location>
        <position position="40"/>
    </location>
    <ligand>
        <name>GTP</name>
        <dbReference type="ChEBI" id="CHEBI:37565"/>
    </ligand>
</feature>
<feature type="binding site" evidence="3">
    <location>
        <position position="40"/>
    </location>
    <ligand>
        <name>Mg(2+)</name>
        <dbReference type="ChEBI" id="CHEBI:18420"/>
    </ligand>
</feature>
<feature type="binding site" evidence="3">
    <location>
        <position position="63"/>
    </location>
    <ligand>
        <name>Mg(2+)</name>
        <dbReference type="ChEBI" id="CHEBI:18420"/>
    </ligand>
</feature>
<feature type="binding site" evidence="3">
    <location>
        <position position="66"/>
    </location>
    <ligand>
        <name>GTP</name>
        <dbReference type="ChEBI" id="CHEBI:37565"/>
    </ligand>
</feature>
<feature type="binding site" evidence="3">
    <location>
        <position position="121"/>
    </location>
    <ligand>
        <name>GTP</name>
        <dbReference type="ChEBI" id="CHEBI:37565"/>
    </ligand>
</feature>
<feature type="binding site" evidence="3">
    <location>
        <position position="122"/>
    </location>
    <ligand>
        <name>GTP</name>
        <dbReference type="ChEBI" id="CHEBI:37565"/>
    </ligand>
</feature>
<feature type="binding site" evidence="3">
    <location>
        <position position="124"/>
    </location>
    <ligand>
        <name>GTP</name>
        <dbReference type="ChEBI" id="CHEBI:37565"/>
    </ligand>
</feature>
<feature type="binding site" evidence="3">
    <location>
        <position position="152"/>
    </location>
    <ligand>
        <name>GTP</name>
        <dbReference type="ChEBI" id="CHEBI:37565"/>
    </ligand>
</feature>
<feature type="binding site" evidence="3">
    <location>
        <position position="153"/>
    </location>
    <ligand>
        <name>GTP</name>
        <dbReference type="ChEBI" id="CHEBI:37565"/>
    </ligand>
</feature>
<feature type="modified residue" description="Phosphothreonine" evidence="3">
    <location>
        <position position="72"/>
    </location>
</feature>
<feature type="modified residue" description="Phosphoserine" evidence="11">
    <location>
        <position position="181"/>
    </location>
</feature>
<feature type="modified residue" description="Phosphoserine" evidence="3">
    <location>
        <position position="185"/>
    </location>
</feature>
<feature type="modified residue" description="Cysteine methyl ester" evidence="7">
    <location>
        <position position="204"/>
    </location>
</feature>
<feature type="lipid moiety-binding region" description="S-geranylgeranyl cysteine" evidence="1">
    <location>
        <position position="204"/>
    </location>
</feature>
<feature type="sequence conflict" description="In Ref. 2; AAA41997." evidence="9" ref="2">
    <original>W</original>
    <variation>S</variation>
    <location>
        <position position="102"/>
    </location>
</feature>
<feature type="sequence conflict" description="In Ref. 2; AAA41997." evidence="9" ref="2">
    <original>KLEGNSPQG</original>
    <variation>NWNPTTLR</variation>
    <location>
        <begin position="176"/>
        <end position="184"/>
    </location>
</feature>
<feature type="sequence conflict" description="In Ref. 2; AAA41997." evidence="9" ref="2">
    <original>T</original>
    <variation>R</variation>
    <location>
        <position position="199"/>
    </location>
</feature>
<sequence>MAKTYDYLFKLLLIGDSGVGKTCVLFRFSEDAFNSTFISTIGIDFKIRTIELDGKRIKLQIWDTAGQERFRTITTAYYRGAMGIMLVYDITNEKSFDNIRNWIRNIEEHASADVEKMILGNKCDVNDKRQVSKERGEKLALDYGIKFMETSAKANINVENAFFTLARDIKAKMDKKLEGNSPQGSSHGVKITVEQQKRTSFFRCSLL</sequence>
<keyword id="KW-0072">Autophagy</keyword>
<keyword id="KW-1003">Cell membrane</keyword>
<keyword id="KW-0966">Cell projection</keyword>
<keyword id="KW-0969">Cilium</keyword>
<keyword id="KW-0970">Cilium biogenesis/degradation</keyword>
<keyword id="KW-0963">Cytoplasm</keyword>
<keyword id="KW-0968">Cytoplasmic vesicle</keyword>
<keyword id="KW-0206">Cytoskeleton</keyword>
<keyword id="KW-0967">Endosome</keyword>
<keyword id="KW-0333">Golgi apparatus</keyword>
<keyword id="KW-0342">GTP-binding</keyword>
<keyword id="KW-0378">Hydrolase</keyword>
<keyword id="KW-0449">Lipoprotein</keyword>
<keyword id="KW-0458">Lysosome</keyword>
<keyword id="KW-0460">Magnesium</keyword>
<keyword id="KW-0472">Membrane</keyword>
<keyword id="KW-0479">Metal-binding</keyword>
<keyword id="KW-0488">Methylation</keyword>
<keyword id="KW-0547">Nucleotide-binding</keyword>
<keyword id="KW-0597">Phosphoprotein</keyword>
<keyword id="KW-0636">Prenylation</keyword>
<keyword id="KW-0653">Protein transport</keyword>
<keyword id="KW-1185">Reference proteome</keyword>
<keyword id="KW-0813">Transport</keyword>
<organism>
    <name type="scientific">Rattus norvegicus</name>
    <name type="common">Rat</name>
    <dbReference type="NCBI Taxonomy" id="10116"/>
    <lineage>
        <taxon>Eukaryota</taxon>
        <taxon>Metazoa</taxon>
        <taxon>Chordata</taxon>
        <taxon>Craniata</taxon>
        <taxon>Vertebrata</taxon>
        <taxon>Euteleostomi</taxon>
        <taxon>Mammalia</taxon>
        <taxon>Eutheria</taxon>
        <taxon>Euarchontoglires</taxon>
        <taxon>Glires</taxon>
        <taxon>Rodentia</taxon>
        <taxon>Myomorpha</taxon>
        <taxon>Muroidea</taxon>
        <taxon>Muridae</taxon>
        <taxon>Murinae</taxon>
        <taxon>Rattus</taxon>
    </lineage>
</organism>
<accession>P35280</accession>
<accession>Q3B8Q4</accession>
<accession>Q6DKL2</accession>
<gene>
    <name evidence="10" type="primary">Rab8a</name>
    <name type="synonym">Rab8</name>
</gene>
<evidence type="ECO:0000250" key="1"/>
<evidence type="ECO:0000250" key="2">
    <source>
        <dbReference type="UniProtKB" id="P55258"/>
    </source>
</evidence>
<evidence type="ECO:0000250" key="3">
    <source>
        <dbReference type="UniProtKB" id="P61006"/>
    </source>
</evidence>
<evidence type="ECO:0000250" key="4">
    <source>
        <dbReference type="UniProtKB" id="P61007"/>
    </source>
</evidence>
<evidence type="ECO:0000250" key="5">
    <source>
        <dbReference type="UniProtKB" id="P62820"/>
    </source>
</evidence>
<evidence type="ECO:0000250" key="6">
    <source>
        <dbReference type="UniProtKB" id="Q92930"/>
    </source>
</evidence>
<evidence type="ECO:0000255" key="7"/>
<evidence type="ECO:0000269" key="8">
    <source>
    </source>
</evidence>
<evidence type="ECO:0000305" key="9"/>
<evidence type="ECO:0000312" key="10">
    <source>
        <dbReference type="RGD" id="621144"/>
    </source>
</evidence>
<evidence type="ECO:0007744" key="11">
    <source>
    </source>
</evidence>
<proteinExistence type="evidence at protein level"/>
<name>RAB8A_RAT</name>
<protein>
    <recommendedName>
        <fullName>Ras-related protein Rab-8A</fullName>
        <ecNumber evidence="3">3.6.5.2</ecNumber>
    </recommendedName>
</protein>
<reference key="1">
    <citation type="journal article" date="2004" name="Genome Res.">
        <title>The status, quality, and expansion of the NIH full-length cDNA project: the Mammalian Gene Collection (MGC).</title>
        <authorList>
            <consortium name="The MGC Project Team"/>
        </authorList>
    </citation>
    <scope>NUCLEOTIDE SEQUENCE [LARGE SCALE MRNA]</scope>
    <source>
        <tissue>Lung</tissue>
        <tissue>Testis</tissue>
    </source>
</reference>
<reference key="2">
    <citation type="journal article" date="1992" name="J. Biol. Chem.">
        <title>Rab15, a novel low molecular weight GTP-binding protein specifically expressed in rat brain.</title>
        <authorList>
            <person name="Elferink L.A."/>
            <person name="Anzai K."/>
            <person name="Scheller R.H."/>
        </authorList>
    </citation>
    <scope>NUCLEOTIDE SEQUENCE [MRNA] OF 73-207</scope>
    <source>
        <strain>Sprague-Dawley</strain>
        <tissue>Brain</tissue>
    </source>
</reference>
<reference key="3">
    <citation type="journal article" date="2010" name="Proc. Natl. Acad. Sci. U.S.A.">
        <title>Rab8A and Rab13 are activated by insulin and regulate GLUT4 translocation in muscle cells.</title>
        <authorList>
            <person name="Sun Y."/>
            <person name="Bilan P.J."/>
            <person name="Liu Z."/>
            <person name="Klip A."/>
        </authorList>
    </citation>
    <scope>FUNCTION IN EXOCYTOSIS</scope>
    <scope>ACTIVITY REGULATION</scope>
</reference>
<reference key="4">
    <citation type="journal article" date="2012" name="Nat. Commun.">
        <title>Quantitative maps of protein phosphorylation sites across 14 different rat organs and tissues.</title>
        <authorList>
            <person name="Lundby A."/>
            <person name="Secher A."/>
            <person name="Lage K."/>
            <person name="Nordsborg N.B."/>
            <person name="Dmytriyev A."/>
            <person name="Lundby C."/>
            <person name="Olsen J.V."/>
        </authorList>
    </citation>
    <scope>PHOSPHORYLATION [LARGE SCALE ANALYSIS] AT SER-181</scope>
    <scope>IDENTIFICATION BY MASS SPECTROMETRY [LARGE SCALE ANALYSIS]</scope>
</reference>